<proteinExistence type="inferred from homology"/>
<feature type="signal peptide" evidence="1">
    <location>
        <begin position="1"/>
        <end position="25"/>
    </location>
</feature>
<feature type="chain" id="PRO_5035448167" description="Teratocyte protein CftICK-II" evidence="4">
    <location>
        <begin position="26"/>
        <end position="67"/>
    </location>
</feature>
<feature type="disulfide bond" evidence="4">
    <location>
        <begin position="28"/>
        <end position="42"/>
    </location>
</feature>
<feature type="disulfide bond" evidence="4">
    <location>
        <begin position="35"/>
        <end position="46"/>
    </location>
</feature>
<feature type="disulfide bond" evidence="4">
    <location>
        <begin position="41"/>
        <end position="57"/>
    </location>
</feature>
<comment type="function">
    <text evidence="2">This endoparasitoid wasp peptide has immununosuppressive, antimicrobial and insecticidal activities. Suppress cellular immunity which is detectable as a reduction of hemocyte encapsulation in the host. Shows moderate antifungal activity against C.albicans (MIC=4 ug/ml). In vivo, ingestion of this peptide (probably at excessive doses) increases larval mortality and reduces leaf consumption of D.saccharalis, a permissive host for C.flavipes.</text>
</comment>
<comment type="subcellular location">
    <subcellularLocation>
        <location evidence="4">Secreted</location>
    </subcellularLocation>
</comment>
<comment type="tissue specificity">
    <text evidence="4">Abundantly expressed by teratocytes, which are extra-embryonic cells released by parasitoid wasps into their hosts during larval eclosion.</text>
</comment>
<comment type="domain">
    <text evidence="4">The presence of a 'disulfide through disulfide knot' structurally defines this protein as a knottin.</text>
</comment>
<comment type="miscellaneous">
    <text evidence="2">Negative results: does not influence host total hemocyte count. Does not influence hemocyte spread index in the host. Has no effect on humoral immune system, since it does not influence the activities of prophenoloxidase and phenoloxidase in the hemolymph of larval Diatraea saccharalis. Non-toxic to human cells, Gram-positive or -negative bacteria. In vivo, ingestion of this peptide does not impact larval mortality of the lepidopteran species S.frugiperda, a non- permissive host for C.flavipes.</text>
</comment>
<accession>A0A8K1YTU0</accession>
<reference evidence="5" key="1">
    <citation type="journal article" date="2022" name="J. Insect Physiol.">
        <title>Proteotranscriptomics reveals the secretory dynamics of teratocytes, regulators of parasitization by an endoparasitoid wasp.</title>
        <authorList>
            <person name="Pinto C.P.G."/>
            <person name="Walker A.A."/>
            <person name="Robinson S.D."/>
            <person name="King G.F."/>
            <person name="Rossi G.D."/>
        </authorList>
    </citation>
    <scope>NUCLEOTIDE SEQUENCE [MRNA]</scope>
</reference>
<reference key="2">
    <citation type="journal article" date="2022" name="Insect Sci.">
        <title>Immunosuppressive, antimicrobial and insecticidal activities of inhibitor cystine knot peptides produced by teratocytes of the endoparasitoid wasp Cotesia flavipes (Hymenoptera: Braconidae).</title>
        <authorList>
            <person name="Pinto C.P.G."/>
            <person name="Walker A.A."/>
            <person name="King G.F."/>
            <person name="Rossi G.D."/>
        </authorList>
    </citation>
    <scope>FUNCTION</scope>
    <scope>SYNTHESIS OF 26-67</scope>
</reference>
<dbReference type="EMBL" id="MZ746721">
    <property type="protein sequence ID" value="UEP64314.1"/>
    <property type="molecule type" value="mRNA"/>
</dbReference>
<dbReference type="GO" id="GO:0005576">
    <property type="term" value="C:extracellular region"/>
    <property type="evidence" value="ECO:0007669"/>
    <property type="project" value="UniProtKB-SubCell"/>
</dbReference>
<dbReference type="GO" id="GO:0050832">
    <property type="term" value="P:defense response to fungus"/>
    <property type="evidence" value="ECO:0007669"/>
    <property type="project" value="UniProtKB-KW"/>
</dbReference>
<dbReference type="GO" id="GO:0031640">
    <property type="term" value="P:killing of cells of another organism"/>
    <property type="evidence" value="ECO:0007669"/>
    <property type="project" value="UniProtKB-KW"/>
</dbReference>
<organism>
    <name type="scientific">Cotesia flavipes</name>
    <name type="common">Parasitic wasp</name>
    <name type="synonym">Apanteles flavipes</name>
    <dbReference type="NCBI Taxonomy" id="89805"/>
    <lineage>
        <taxon>Eukaryota</taxon>
        <taxon>Metazoa</taxon>
        <taxon>Ecdysozoa</taxon>
        <taxon>Arthropoda</taxon>
        <taxon>Hexapoda</taxon>
        <taxon>Insecta</taxon>
        <taxon>Pterygota</taxon>
        <taxon>Neoptera</taxon>
        <taxon>Endopterygota</taxon>
        <taxon>Hymenoptera</taxon>
        <taxon>Apocrita</taxon>
        <taxon>Ichneumonoidea</taxon>
        <taxon>Braconidae</taxon>
        <taxon>Microgastrinae</taxon>
        <taxon>Cotesia</taxon>
    </lineage>
</organism>
<evidence type="ECO:0000255" key="1"/>
<evidence type="ECO:0000269" key="2">
    <source>
    </source>
</evidence>
<evidence type="ECO:0000303" key="3">
    <source>
    </source>
</evidence>
<evidence type="ECO:0000305" key="4">
    <source>
    </source>
</evidence>
<evidence type="ECO:0000312" key="5">
    <source>
        <dbReference type="EMBL" id="UEP64314.1"/>
    </source>
</evidence>
<keyword id="KW-0929">Antimicrobial</keyword>
<keyword id="KW-1015">Disulfide bond</keyword>
<keyword id="KW-0295">Fungicide</keyword>
<keyword id="KW-0964">Secreted</keyword>
<keyword id="KW-0732">Signal</keyword>
<name>TP2_COTFL</name>
<protein>
    <recommendedName>
        <fullName evidence="3">Teratocyte protein CftICK-II</fullName>
    </recommendedName>
</protein>
<sequence>MVKSLLFAIGYLIFLLVTRVNVINADICSHLGYACADDNECCDKFCKGLTPTTYGICNKKPYTYRQY</sequence>